<reference key="1">
    <citation type="submission" date="2006-04" db="EMBL/GenBank/DDBJ databases">
        <title>Identification and characterization of a novel member of the fibroblast growth factor-binding protein family, FGF-BP3.</title>
        <authorList>
            <person name="Swift M.R."/>
            <person name="Tassi E."/>
            <person name="Wellstein A."/>
        </authorList>
    </citation>
    <scope>NUCLEOTIDE SEQUENCE [MRNA]</scope>
</reference>
<reference key="2">
    <citation type="journal article" date="2004" name="Genome Res.">
        <title>The status, quality, and expansion of the NIH full-length cDNA project: the Mammalian Gene Collection (MGC).</title>
        <authorList>
            <consortium name="The MGC Project Team"/>
        </authorList>
    </citation>
    <scope>NUCLEOTIDE SEQUENCE [LARGE SCALE MRNA]</scope>
    <source>
        <strain>C57BL/6J</strain>
        <tissue>Brain</tissue>
    </source>
</reference>
<reference key="3">
    <citation type="journal article" date="2005" name="Science">
        <title>The transcriptional landscape of the mammalian genome.</title>
        <authorList>
            <person name="Carninci P."/>
            <person name="Kasukawa T."/>
            <person name="Katayama S."/>
            <person name="Gough J."/>
            <person name="Frith M.C."/>
            <person name="Maeda N."/>
            <person name="Oyama R."/>
            <person name="Ravasi T."/>
            <person name="Lenhard B."/>
            <person name="Wells C."/>
            <person name="Kodzius R."/>
            <person name="Shimokawa K."/>
            <person name="Bajic V.B."/>
            <person name="Brenner S.E."/>
            <person name="Batalov S."/>
            <person name="Forrest A.R."/>
            <person name="Zavolan M."/>
            <person name="Davis M.J."/>
            <person name="Wilming L.G."/>
            <person name="Aidinis V."/>
            <person name="Allen J.E."/>
            <person name="Ambesi-Impiombato A."/>
            <person name="Apweiler R."/>
            <person name="Aturaliya R.N."/>
            <person name="Bailey T.L."/>
            <person name="Bansal M."/>
            <person name="Baxter L."/>
            <person name="Beisel K.W."/>
            <person name="Bersano T."/>
            <person name="Bono H."/>
            <person name="Chalk A.M."/>
            <person name="Chiu K.P."/>
            <person name="Choudhary V."/>
            <person name="Christoffels A."/>
            <person name="Clutterbuck D.R."/>
            <person name="Crowe M.L."/>
            <person name="Dalla E."/>
            <person name="Dalrymple B.P."/>
            <person name="de Bono B."/>
            <person name="Della Gatta G."/>
            <person name="di Bernardo D."/>
            <person name="Down T."/>
            <person name="Engstrom P."/>
            <person name="Fagiolini M."/>
            <person name="Faulkner G."/>
            <person name="Fletcher C.F."/>
            <person name="Fukushima T."/>
            <person name="Furuno M."/>
            <person name="Futaki S."/>
            <person name="Gariboldi M."/>
            <person name="Georgii-Hemming P."/>
            <person name="Gingeras T.R."/>
            <person name="Gojobori T."/>
            <person name="Green R.E."/>
            <person name="Gustincich S."/>
            <person name="Harbers M."/>
            <person name="Hayashi Y."/>
            <person name="Hensch T.K."/>
            <person name="Hirokawa N."/>
            <person name="Hill D."/>
            <person name="Huminiecki L."/>
            <person name="Iacono M."/>
            <person name="Ikeo K."/>
            <person name="Iwama A."/>
            <person name="Ishikawa T."/>
            <person name="Jakt M."/>
            <person name="Kanapin A."/>
            <person name="Katoh M."/>
            <person name="Kawasawa Y."/>
            <person name="Kelso J."/>
            <person name="Kitamura H."/>
            <person name="Kitano H."/>
            <person name="Kollias G."/>
            <person name="Krishnan S.P."/>
            <person name="Kruger A."/>
            <person name="Kummerfeld S.K."/>
            <person name="Kurochkin I.V."/>
            <person name="Lareau L.F."/>
            <person name="Lazarevic D."/>
            <person name="Lipovich L."/>
            <person name="Liu J."/>
            <person name="Liuni S."/>
            <person name="McWilliam S."/>
            <person name="Madan Babu M."/>
            <person name="Madera M."/>
            <person name="Marchionni L."/>
            <person name="Matsuda H."/>
            <person name="Matsuzawa S."/>
            <person name="Miki H."/>
            <person name="Mignone F."/>
            <person name="Miyake S."/>
            <person name="Morris K."/>
            <person name="Mottagui-Tabar S."/>
            <person name="Mulder N."/>
            <person name="Nakano N."/>
            <person name="Nakauchi H."/>
            <person name="Ng P."/>
            <person name="Nilsson R."/>
            <person name="Nishiguchi S."/>
            <person name="Nishikawa S."/>
            <person name="Nori F."/>
            <person name="Ohara O."/>
            <person name="Okazaki Y."/>
            <person name="Orlando V."/>
            <person name="Pang K.C."/>
            <person name="Pavan W.J."/>
            <person name="Pavesi G."/>
            <person name="Pesole G."/>
            <person name="Petrovsky N."/>
            <person name="Piazza S."/>
            <person name="Reed J."/>
            <person name="Reid J.F."/>
            <person name="Ring B.Z."/>
            <person name="Ringwald M."/>
            <person name="Rost B."/>
            <person name="Ruan Y."/>
            <person name="Salzberg S.L."/>
            <person name="Sandelin A."/>
            <person name="Schneider C."/>
            <person name="Schoenbach C."/>
            <person name="Sekiguchi K."/>
            <person name="Semple C.A."/>
            <person name="Seno S."/>
            <person name="Sessa L."/>
            <person name="Sheng Y."/>
            <person name="Shibata Y."/>
            <person name="Shimada H."/>
            <person name="Shimada K."/>
            <person name="Silva D."/>
            <person name="Sinclair B."/>
            <person name="Sperling S."/>
            <person name="Stupka E."/>
            <person name="Sugiura K."/>
            <person name="Sultana R."/>
            <person name="Takenaka Y."/>
            <person name="Taki K."/>
            <person name="Tammoja K."/>
            <person name="Tan S.L."/>
            <person name="Tang S."/>
            <person name="Taylor M.S."/>
            <person name="Tegner J."/>
            <person name="Teichmann S.A."/>
            <person name="Ueda H.R."/>
            <person name="van Nimwegen E."/>
            <person name="Verardo R."/>
            <person name="Wei C.L."/>
            <person name="Yagi K."/>
            <person name="Yamanishi H."/>
            <person name="Zabarovsky E."/>
            <person name="Zhu S."/>
            <person name="Zimmer A."/>
            <person name="Hide W."/>
            <person name="Bult C."/>
            <person name="Grimmond S.M."/>
            <person name="Teasdale R.D."/>
            <person name="Liu E.T."/>
            <person name="Brusic V."/>
            <person name="Quackenbush J."/>
            <person name="Wahlestedt C."/>
            <person name="Mattick J.S."/>
            <person name="Hume D.A."/>
            <person name="Kai C."/>
            <person name="Sasaki D."/>
            <person name="Tomaru Y."/>
            <person name="Fukuda S."/>
            <person name="Kanamori-Katayama M."/>
            <person name="Suzuki M."/>
            <person name="Aoki J."/>
            <person name="Arakawa T."/>
            <person name="Iida J."/>
            <person name="Imamura K."/>
            <person name="Itoh M."/>
            <person name="Kato T."/>
            <person name="Kawaji H."/>
            <person name="Kawagashira N."/>
            <person name="Kawashima T."/>
            <person name="Kojima M."/>
            <person name="Kondo S."/>
            <person name="Konno H."/>
            <person name="Nakano K."/>
            <person name="Ninomiya N."/>
            <person name="Nishio T."/>
            <person name="Okada M."/>
            <person name="Plessy C."/>
            <person name="Shibata K."/>
            <person name="Shiraki T."/>
            <person name="Suzuki S."/>
            <person name="Tagami M."/>
            <person name="Waki K."/>
            <person name="Watahiki A."/>
            <person name="Okamura-Oho Y."/>
            <person name="Suzuki H."/>
            <person name="Kawai J."/>
            <person name="Hayashizaki Y."/>
        </authorList>
    </citation>
    <scope>NUCLEOTIDE SEQUENCE [LARGE SCALE MRNA] OF 32-245</scope>
    <source>
        <strain>C57BL/6J</strain>
        <tissue>Head</tissue>
    </source>
</reference>
<reference key="4">
    <citation type="journal article" date="2011" name="Mol. Cell. Neurosci.">
        <title>Inactivation of fibroblast growth factor binding protein 3 causes anxiety-related behaviors.</title>
        <authorList>
            <person name="Yamanaka Y."/>
            <person name="Kitano A."/>
            <person name="Takao K."/>
            <person name="Prasansuklab A."/>
            <person name="Mushiroda T."/>
            <person name="Yamazaki K."/>
            <person name="Kumada T."/>
            <person name="Shibata M."/>
            <person name="Takaoka Y."/>
            <person name="Awaya T."/>
            <person name="Kato T."/>
            <person name="Abe T."/>
            <person name="Iwata N."/>
            <person name="Miyakawa T."/>
            <person name="Nakamura Y."/>
            <person name="Nakahata T."/>
            <person name="Heike T."/>
        </authorList>
    </citation>
    <scope>INTERACTION WITH FGF2</scope>
    <scope>TISSUE SPECIFICITY</scope>
    <scope>DEVELOPMENTAL STAGE</scope>
    <scope>DISRUPTION PHENOTYPE</scope>
</reference>
<organism>
    <name type="scientific">Mus musculus</name>
    <name type="common">Mouse</name>
    <dbReference type="NCBI Taxonomy" id="10090"/>
    <lineage>
        <taxon>Eukaryota</taxon>
        <taxon>Metazoa</taxon>
        <taxon>Chordata</taxon>
        <taxon>Craniata</taxon>
        <taxon>Vertebrata</taxon>
        <taxon>Euteleostomi</taxon>
        <taxon>Mammalia</taxon>
        <taxon>Eutheria</taxon>
        <taxon>Euarchontoglires</taxon>
        <taxon>Glires</taxon>
        <taxon>Rodentia</taxon>
        <taxon>Myomorpha</taxon>
        <taxon>Muroidea</taxon>
        <taxon>Muridae</taxon>
        <taxon>Murinae</taxon>
        <taxon>Mus</taxon>
        <taxon>Mus</taxon>
    </lineage>
</organism>
<name>FGFP3_MOUSE</name>
<protein>
    <recommendedName>
        <fullName>Fibroblast growth factor-binding protein 3</fullName>
        <shortName>FGF-BP3</shortName>
        <shortName>FGF-binding protein 3</shortName>
        <shortName>FGFBP-3</shortName>
    </recommendedName>
</protein>
<proteinExistence type="evidence at protein level"/>
<gene>
    <name type="primary">Fgfbp3</name>
</gene>
<feature type="signal peptide" evidence="3">
    <location>
        <begin position="1"/>
        <end position="28"/>
    </location>
</feature>
<feature type="chain" id="PRO_0000322978" description="Fibroblast growth factor-binding protein 3">
    <location>
        <begin position="29"/>
        <end position="245"/>
    </location>
</feature>
<feature type="region of interest" description="Disordered" evidence="4">
    <location>
        <begin position="33"/>
        <end position="52"/>
    </location>
</feature>
<feature type="region of interest" description="Disordered" evidence="4">
    <location>
        <begin position="136"/>
        <end position="216"/>
    </location>
</feature>
<feature type="compositionally biased region" description="Low complexity" evidence="4">
    <location>
        <begin position="170"/>
        <end position="180"/>
    </location>
</feature>
<feature type="disulfide bond" evidence="1">
    <location>
        <begin position="60"/>
        <end position="81"/>
    </location>
</feature>
<feature type="disulfide bond" evidence="1">
    <location>
        <begin position="91"/>
        <end position="125"/>
    </location>
</feature>
<feature type="disulfide bond" evidence="1">
    <location>
        <begin position="228"/>
        <end position="236"/>
    </location>
</feature>
<comment type="function">
    <text evidence="2">Heparin-binding protein which binds to FGF2, prevents binding of FGF2 to heparin and probably inhibits immobilization of FGF2 on extracellular matrix glycosaminoglycans, allowing its release and subsequent activation of FGFR signaling which leads to increased vascular permeability.</text>
</comment>
<comment type="subunit">
    <text evidence="5">Interacts with FGF2.</text>
</comment>
<comment type="subcellular location">
    <subcellularLocation>
        <location evidence="2">Secreted</location>
    </subcellularLocation>
</comment>
<comment type="tissue specificity">
    <text evidence="5">In the adult, highly expressed in brain with lower levels in ovary. In the embryo, highest levels are found in the brain and spinal cord at 14 dpc and expression is almost completely restricted to the brain by 18 dpc. In the adult and postnatal brain, highly expressed in the orbitofrontal cortex where it is concentrated primarily in differentiated neurons.</text>
</comment>
<comment type="developmental stage">
    <text evidence="5">Expression is first detected at 10 dpc and reaches a peak at birth. After birth, levels decrease and remain constant throughout postnatal development.</text>
</comment>
<comment type="disruption phenotype">
    <text evidence="5">Mutants display a range of anxiety-related behaviors including reduced time spent in the central area of the open-field arena, reduced activity in lit areas of a light/dark transition test and prolonged latency to feeding in a novelty induced hypophagia test which assesses the drive to drink a sweetened milk solution.</text>
</comment>
<comment type="similarity">
    <text evidence="6">Belongs to the fibroblast growth factor-binding protein family.</text>
</comment>
<comment type="sequence caution" evidence="6">
    <conflict type="erroneous initiation">
        <sequence resource="EMBL-CDS" id="ABF56583"/>
    </conflict>
</comment>
<dbReference type="EMBL" id="DQ503577">
    <property type="protein sequence ID" value="ABF56583.1"/>
    <property type="status" value="ALT_INIT"/>
    <property type="molecule type" value="mRNA"/>
</dbReference>
<dbReference type="EMBL" id="BC055778">
    <property type="protein sequence ID" value="AAH55778.1"/>
    <property type="molecule type" value="mRNA"/>
</dbReference>
<dbReference type="EMBL" id="AK029452">
    <property type="protein sequence ID" value="BAC26455.1"/>
    <property type="molecule type" value="mRNA"/>
</dbReference>
<dbReference type="RefSeq" id="NP_082539.2">
    <property type="nucleotide sequence ID" value="NM_028263.1"/>
</dbReference>
<dbReference type="FunCoup" id="Q1HCM0">
    <property type="interactions" value="191"/>
</dbReference>
<dbReference type="STRING" id="10090.ENSMUSP00000159137"/>
<dbReference type="PhosphoSitePlus" id="Q1HCM0"/>
<dbReference type="PaxDb" id="10090-ENSMUSP00000059682"/>
<dbReference type="Antibodypedia" id="52908">
    <property type="antibodies" value="86 antibodies from 22 providers"/>
</dbReference>
<dbReference type="DNASU" id="72514"/>
<dbReference type="Ensembl" id="ENSMUST00000057337.9">
    <property type="protein sequence ID" value="ENSMUSP00000059682.9"/>
    <property type="gene ID" value="ENSMUSG00000047632.12"/>
</dbReference>
<dbReference type="GeneID" id="72514"/>
<dbReference type="KEGG" id="mmu:72514"/>
<dbReference type="UCSC" id="uc008hhv.1">
    <property type="organism name" value="mouse"/>
</dbReference>
<dbReference type="AGR" id="MGI:1919764"/>
<dbReference type="CTD" id="143282"/>
<dbReference type="MGI" id="MGI:1919764">
    <property type="gene designation" value="Fgfbp3"/>
</dbReference>
<dbReference type="VEuPathDB" id="HostDB:ENSMUSG00000047632"/>
<dbReference type="eggNOG" id="ENOG502S2Z7">
    <property type="taxonomic scope" value="Eukaryota"/>
</dbReference>
<dbReference type="GeneTree" id="ENSGT00940000154372"/>
<dbReference type="InParanoid" id="Q1HCM0"/>
<dbReference type="OrthoDB" id="8803710at2759"/>
<dbReference type="PhylomeDB" id="Q1HCM0"/>
<dbReference type="TreeFam" id="TF335877"/>
<dbReference type="Reactome" id="R-MMU-190377">
    <property type="pathway name" value="FGFR2b ligand binding and activation"/>
</dbReference>
<dbReference type="BioGRID-ORCS" id="72514">
    <property type="hits" value="2 hits in 76 CRISPR screens"/>
</dbReference>
<dbReference type="ChiTaRS" id="Fgfbp3">
    <property type="organism name" value="mouse"/>
</dbReference>
<dbReference type="PRO" id="PR:Q1HCM0"/>
<dbReference type="Proteomes" id="UP000000589">
    <property type="component" value="Chromosome 19"/>
</dbReference>
<dbReference type="RNAct" id="Q1HCM0">
    <property type="molecule type" value="protein"/>
</dbReference>
<dbReference type="Bgee" id="ENSMUSG00000047632">
    <property type="expression patterns" value="Expressed in cerebral cortex ventricular layer and 197 other cell types or tissues"/>
</dbReference>
<dbReference type="ExpressionAtlas" id="Q1HCM0">
    <property type="expression patterns" value="baseline and differential"/>
</dbReference>
<dbReference type="GO" id="GO:0005576">
    <property type="term" value="C:extracellular region"/>
    <property type="evidence" value="ECO:0000266"/>
    <property type="project" value="MGI"/>
</dbReference>
<dbReference type="GO" id="GO:0017134">
    <property type="term" value="F:fibroblast growth factor binding"/>
    <property type="evidence" value="ECO:0000353"/>
    <property type="project" value="UniProtKB"/>
</dbReference>
<dbReference type="GO" id="GO:0008201">
    <property type="term" value="F:heparin binding"/>
    <property type="evidence" value="ECO:0000266"/>
    <property type="project" value="MGI"/>
</dbReference>
<dbReference type="GO" id="GO:0030534">
    <property type="term" value="P:adult behavior"/>
    <property type="evidence" value="ECO:0000315"/>
    <property type="project" value="UniProtKB"/>
</dbReference>
<dbReference type="GO" id="GO:0070374">
    <property type="term" value="P:positive regulation of ERK1 and ERK2 cascade"/>
    <property type="evidence" value="ECO:0000315"/>
    <property type="project" value="UniProtKB"/>
</dbReference>
<dbReference type="GO" id="GO:0045743">
    <property type="term" value="P:positive regulation of fibroblast growth factor receptor signaling pathway"/>
    <property type="evidence" value="ECO:0000266"/>
    <property type="project" value="MGI"/>
</dbReference>
<dbReference type="GO" id="GO:0031646">
    <property type="term" value="P:positive regulation of nervous system process"/>
    <property type="evidence" value="ECO:0000315"/>
    <property type="project" value="UniProtKB"/>
</dbReference>
<dbReference type="GO" id="GO:0043117">
    <property type="term" value="P:positive regulation of vascular permeability"/>
    <property type="evidence" value="ECO:0000266"/>
    <property type="project" value="MGI"/>
</dbReference>
<dbReference type="InterPro" id="IPR010510">
    <property type="entry name" value="FGF1-bd"/>
</dbReference>
<dbReference type="PANTHER" id="PTHR15258">
    <property type="entry name" value="FGF BINDING PROTEIN-RELATED"/>
    <property type="match status" value="1"/>
</dbReference>
<dbReference type="PANTHER" id="PTHR15258:SF3">
    <property type="entry name" value="FIBROBLAST GROWTH FACTOR-BINDING PROTEIN 3"/>
    <property type="match status" value="1"/>
</dbReference>
<dbReference type="Pfam" id="PF06473">
    <property type="entry name" value="FGF-BP1"/>
    <property type="match status" value="1"/>
</dbReference>
<sequence length="245" mass="26217">MSPPRPRASLSPLTLLLLLGGCLLSAAGRDKGAAGREVTRASRPTVGSSGRFVSPEQHACSWQLLVPAPGTPTGGELALRCQTPGGASLHCAYRGHPERCAATGARRAHYWRRLLGALRRRPRPCLDPAPLPPRLCARKTAGSDLHSPAHPSLPARPSEPPRSRARSPARSRQSVRSPSSQPEKKPLLVKSNSGGRKAGSDPVPEPPAAAGFQPNGLDQNAELTETYCTEKWHSLCNFFVNFWNG</sequence>
<keyword id="KW-1015">Disulfide bond</keyword>
<keyword id="KW-0340">Growth factor binding</keyword>
<keyword id="KW-0358">Heparin-binding</keyword>
<keyword id="KW-1185">Reference proteome</keyword>
<keyword id="KW-0964">Secreted</keyword>
<keyword id="KW-0732">Signal</keyword>
<accession>Q1HCM0</accession>
<accession>Q7TNS6</accession>
<accession>Q8CDW7</accession>
<evidence type="ECO:0000250" key="1"/>
<evidence type="ECO:0000250" key="2">
    <source>
        <dbReference type="UniProtKB" id="Q8TAT2"/>
    </source>
</evidence>
<evidence type="ECO:0000255" key="3"/>
<evidence type="ECO:0000256" key="4">
    <source>
        <dbReference type="SAM" id="MobiDB-lite"/>
    </source>
</evidence>
<evidence type="ECO:0000269" key="5">
    <source>
    </source>
</evidence>
<evidence type="ECO:0000305" key="6"/>